<comment type="function">
    <text evidence="1">NDH-1 shuttles electrons from NADH, via FMN and iron-sulfur (Fe-S) centers, to quinones in the respiratory chain. The immediate electron acceptor for the enzyme in this species is believed to be ubiquinone. Couples the redox reaction to proton translocation (for every two electrons transferred, four hydrogen ions are translocated across the cytoplasmic membrane), and thus conserves the redox energy in a proton gradient.</text>
</comment>
<comment type="catalytic activity">
    <reaction evidence="1">
        <text>a quinone + NADH + 5 H(+)(in) = a quinol + NAD(+) + 4 H(+)(out)</text>
        <dbReference type="Rhea" id="RHEA:57888"/>
        <dbReference type="ChEBI" id="CHEBI:15378"/>
        <dbReference type="ChEBI" id="CHEBI:24646"/>
        <dbReference type="ChEBI" id="CHEBI:57540"/>
        <dbReference type="ChEBI" id="CHEBI:57945"/>
        <dbReference type="ChEBI" id="CHEBI:132124"/>
    </reaction>
</comment>
<comment type="subunit">
    <text evidence="1">NDH-1 is composed of 14 different subunits. Subunits NuoB, C, D, E, F, and G constitute the peripheral sector of the complex.</text>
</comment>
<comment type="subcellular location">
    <subcellularLocation>
        <location evidence="1">Cell inner membrane</location>
        <topology evidence="1">Peripheral membrane protein</topology>
        <orientation evidence="1">Cytoplasmic side</orientation>
    </subcellularLocation>
</comment>
<comment type="similarity">
    <text evidence="1">Belongs to the complex I 30 kDa subunit family.</text>
</comment>
<organism>
    <name type="scientific">Burkholderia cenocepacia (strain ATCC BAA-245 / DSM 16553 / LMG 16656 / NCTC 13227 / J2315 / CF5610)</name>
    <name type="common">Burkholderia cepacia (strain J2315)</name>
    <dbReference type="NCBI Taxonomy" id="216591"/>
    <lineage>
        <taxon>Bacteria</taxon>
        <taxon>Pseudomonadati</taxon>
        <taxon>Pseudomonadota</taxon>
        <taxon>Betaproteobacteria</taxon>
        <taxon>Burkholderiales</taxon>
        <taxon>Burkholderiaceae</taxon>
        <taxon>Burkholderia</taxon>
        <taxon>Burkholderia cepacia complex</taxon>
    </lineage>
</organism>
<dbReference type="EC" id="7.1.1.-" evidence="1"/>
<dbReference type="EMBL" id="AM747720">
    <property type="protein sequence ID" value="CAR52643.1"/>
    <property type="molecule type" value="Genomic_DNA"/>
</dbReference>
<dbReference type="RefSeq" id="WP_006478264.1">
    <property type="nucleotide sequence ID" value="NC_011000.1"/>
</dbReference>
<dbReference type="SMR" id="B4E5M0"/>
<dbReference type="KEGG" id="bcj:BCAL2342"/>
<dbReference type="eggNOG" id="COG0852">
    <property type="taxonomic scope" value="Bacteria"/>
</dbReference>
<dbReference type="HOGENOM" id="CLU_042628_2_1_4"/>
<dbReference type="BioCyc" id="BCEN216591:G1G1V-2585-MONOMER"/>
<dbReference type="Proteomes" id="UP000001035">
    <property type="component" value="Chromosome 1"/>
</dbReference>
<dbReference type="GO" id="GO:0005886">
    <property type="term" value="C:plasma membrane"/>
    <property type="evidence" value="ECO:0007669"/>
    <property type="project" value="UniProtKB-SubCell"/>
</dbReference>
<dbReference type="GO" id="GO:0008137">
    <property type="term" value="F:NADH dehydrogenase (ubiquinone) activity"/>
    <property type="evidence" value="ECO:0007669"/>
    <property type="project" value="InterPro"/>
</dbReference>
<dbReference type="GO" id="GO:0050136">
    <property type="term" value="F:NADH:ubiquinone reductase (non-electrogenic) activity"/>
    <property type="evidence" value="ECO:0007669"/>
    <property type="project" value="UniProtKB-UniRule"/>
</dbReference>
<dbReference type="GO" id="GO:0048038">
    <property type="term" value="F:quinone binding"/>
    <property type="evidence" value="ECO:0007669"/>
    <property type="project" value="UniProtKB-KW"/>
</dbReference>
<dbReference type="Gene3D" id="3.30.460.80">
    <property type="entry name" value="NADH:ubiquinone oxidoreductase, 30kDa subunit"/>
    <property type="match status" value="1"/>
</dbReference>
<dbReference type="HAMAP" id="MF_01357">
    <property type="entry name" value="NDH1_NuoC"/>
    <property type="match status" value="1"/>
</dbReference>
<dbReference type="InterPro" id="IPR010218">
    <property type="entry name" value="NADH_DH_suC"/>
</dbReference>
<dbReference type="InterPro" id="IPR037232">
    <property type="entry name" value="NADH_quin_OxRdtase_su_C/D-like"/>
</dbReference>
<dbReference type="InterPro" id="IPR001268">
    <property type="entry name" value="NADH_UbQ_OxRdtase_30kDa_su"/>
</dbReference>
<dbReference type="InterPro" id="IPR020396">
    <property type="entry name" value="NADH_UbQ_OxRdtase_CS"/>
</dbReference>
<dbReference type="NCBIfam" id="TIGR01961">
    <property type="entry name" value="NuoC_fam"/>
    <property type="match status" value="1"/>
</dbReference>
<dbReference type="NCBIfam" id="NF004730">
    <property type="entry name" value="PRK06074.1-1"/>
    <property type="match status" value="1"/>
</dbReference>
<dbReference type="PANTHER" id="PTHR10884:SF14">
    <property type="entry name" value="NADH DEHYDROGENASE [UBIQUINONE] IRON-SULFUR PROTEIN 3, MITOCHONDRIAL"/>
    <property type="match status" value="1"/>
</dbReference>
<dbReference type="PANTHER" id="PTHR10884">
    <property type="entry name" value="NADH DEHYDROGENASE UBIQUINONE IRON-SULFUR PROTEIN 3"/>
    <property type="match status" value="1"/>
</dbReference>
<dbReference type="Pfam" id="PF00329">
    <property type="entry name" value="Complex1_30kDa"/>
    <property type="match status" value="1"/>
</dbReference>
<dbReference type="SUPFAM" id="SSF143243">
    <property type="entry name" value="Nqo5-like"/>
    <property type="match status" value="1"/>
</dbReference>
<dbReference type="PROSITE" id="PS00542">
    <property type="entry name" value="COMPLEX1_30K"/>
    <property type="match status" value="1"/>
</dbReference>
<reference key="1">
    <citation type="journal article" date="2009" name="J. Bacteriol.">
        <title>The genome of Burkholderia cenocepacia J2315, an epidemic pathogen of cystic fibrosis patients.</title>
        <authorList>
            <person name="Holden M.T."/>
            <person name="Seth-Smith H.M."/>
            <person name="Crossman L.C."/>
            <person name="Sebaihia M."/>
            <person name="Bentley S.D."/>
            <person name="Cerdeno-Tarraga A.M."/>
            <person name="Thomson N.R."/>
            <person name="Bason N."/>
            <person name="Quail M.A."/>
            <person name="Sharp S."/>
            <person name="Cherevach I."/>
            <person name="Churcher C."/>
            <person name="Goodhead I."/>
            <person name="Hauser H."/>
            <person name="Holroyd N."/>
            <person name="Mungall K."/>
            <person name="Scott P."/>
            <person name="Walker D."/>
            <person name="White B."/>
            <person name="Rose H."/>
            <person name="Iversen P."/>
            <person name="Mil-Homens D."/>
            <person name="Rocha E.P."/>
            <person name="Fialho A.M."/>
            <person name="Baldwin A."/>
            <person name="Dowson C."/>
            <person name="Barrell B.G."/>
            <person name="Govan J.R."/>
            <person name="Vandamme P."/>
            <person name="Hart C.A."/>
            <person name="Mahenthiralingam E."/>
            <person name="Parkhill J."/>
        </authorList>
    </citation>
    <scope>NUCLEOTIDE SEQUENCE [LARGE SCALE GENOMIC DNA]</scope>
    <source>
        <strain>ATCC BAA-245 / DSM 16553 / LMG 16656 / NCTC 13227 / J2315 / CF5610</strain>
    </source>
</reference>
<feature type="chain" id="PRO_0000358063" description="NADH-quinone oxidoreductase subunit C">
    <location>
        <begin position="1"/>
        <end position="200"/>
    </location>
</feature>
<proteinExistence type="inferred from homology"/>
<sequence length="200" mass="22823">MASKIETLKANLEAALGARVVSLTEAIGELTLVVKASDYLEVAKTLRDDPKLRFEQLIDLCGVDYQTFGDGAYDGPRFAAVSHLLSVTNNWRLRLRAFAPDDDLPIVASLVDIWTSANWYEREAFDLYGIVFEGHPDLRRILTDYGFIGHPFRKDFPVSGYVEMRYDPEEKRVVYQPVTIEPREITPRVIREDRYGGLKH</sequence>
<gene>
    <name evidence="1" type="primary">nuoC</name>
    <name type="ordered locus">BceJ2315_23020</name>
    <name type="ORF">BCAL2342</name>
</gene>
<keyword id="KW-0997">Cell inner membrane</keyword>
<keyword id="KW-1003">Cell membrane</keyword>
<keyword id="KW-0472">Membrane</keyword>
<keyword id="KW-0520">NAD</keyword>
<keyword id="KW-0874">Quinone</keyword>
<keyword id="KW-1278">Translocase</keyword>
<keyword id="KW-0813">Transport</keyword>
<keyword id="KW-0830">Ubiquinone</keyword>
<accession>B4E5M0</accession>
<protein>
    <recommendedName>
        <fullName evidence="1">NADH-quinone oxidoreductase subunit C</fullName>
        <ecNumber evidence="1">7.1.1.-</ecNumber>
    </recommendedName>
    <alternativeName>
        <fullName evidence="1">NADH dehydrogenase I subunit C</fullName>
    </alternativeName>
    <alternativeName>
        <fullName evidence="1">NDH-1 subunit C</fullName>
    </alternativeName>
</protein>
<name>NUOC_BURCJ</name>
<evidence type="ECO:0000255" key="1">
    <source>
        <dbReference type="HAMAP-Rule" id="MF_01357"/>
    </source>
</evidence>